<evidence type="ECO:0000255" key="1">
    <source>
        <dbReference type="HAMAP-Rule" id="MF_01355"/>
    </source>
</evidence>
<sequence>MQSILTQETIIIALIYLSLSVLYLLVIPAVIYYYLNTRWYVASSWERGFMYFLMSFFFPGMLLLSPFLNFRPQRRTLKA</sequence>
<dbReference type="EC" id="7.1.1.-" evidence="1"/>
<dbReference type="EMBL" id="AP009552">
    <property type="protein sequence ID" value="BAG04872.1"/>
    <property type="molecule type" value="Genomic_DNA"/>
</dbReference>
<dbReference type="RefSeq" id="WP_002732218.1">
    <property type="nucleotide sequence ID" value="NC_010296.1"/>
</dbReference>
<dbReference type="SMR" id="B0JWY5"/>
<dbReference type="STRING" id="449447.MAE_50500"/>
<dbReference type="PaxDb" id="449447-MAE_50500"/>
<dbReference type="EnsemblBacteria" id="BAG04872">
    <property type="protein sequence ID" value="BAG04872"/>
    <property type="gene ID" value="MAE_50500"/>
</dbReference>
<dbReference type="GeneID" id="66707645"/>
<dbReference type="KEGG" id="mar:MAE_50500"/>
<dbReference type="eggNOG" id="ENOG5032ZM4">
    <property type="taxonomic scope" value="Bacteria"/>
</dbReference>
<dbReference type="HOGENOM" id="CLU_171077_0_0_3"/>
<dbReference type="BioCyc" id="MAER449447:MAE_RS21920-MONOMER"/>
<dbReference type="Proteomes" id="UP000001510">
    <property type="component" value="Chromosome"/>
</dbReference>
<dbReference type="GO" id="GO:0031676">
    <property type="term" value="C:plasma membrane-derived thylakoid membrane"/>
    <property type="evidence" value="ECO:0007669"/>
    <property type="project" value="UniProtKB-SubCell"/>
</dbReference>
<dbReference type="GO" id="GO:0016655">
    <property type="term" value="F:oxidoreductase activity, acting on NAD(P)H, quinone or similar compound as acceptor"/>
    <property type="evidence" value="ECO:0007669"/>
    <property type="project" value="UniProtKB-UniRule"/>
</dbReference>
<dbReference type="GO" id="GO:0048038">
    <property type="term" value="F:quinone binding"/>
    <property type="evidence" value="ECO:0007669"/>
    <property type="project" value="UniProtKB-KW"/>
</dbReference>
<dbReference type="HAMAP" id="MF_01355">
    <property type="entry name" value="NDH1_NDH1L"/>
    <property type="match status" value="1"/>
</dbReference>
<dbReference type="InterPro" id="IPR019654">
    <property type="entry name" value="NADH-quinone_OxRdatse_su_L"/>
</dbReference>
<dbReference type="PANTHER" id="PTHR36727">
    <property type="entry name" value="NAD(P)H-QUINONE OXIDOREDUCTASE SUBUNIT L, CHLOROPLASTIC"/>
    <property type="match status" value="1"/>
</dbReference>
<dbReference type="PANTHER" id="PTHR36727:SF2">
    <property type="entry name" value="NAD(P)H-QUINONE OXIDOREDUCTASE SUBUNIT L, CHLOROPLASTIC"/>
    <property type="match status" value="1"/>
</dbReference>
<dbReference type="Pfam" id="PF10716">
    <property type="entry name" value="NdhL"/>
    <property type="match status" value="1"/>
</dbReference>
<name>NDHL_MICAN</name>
<gene>
    <name evidence="1" type="primary">ndhL</name>
    <name type="ordered locus">MAE_50500</name>
</gene>
<accession>B0JWY5</accession>
<reference key="1">
    <citation type="journal article" date="2007" name="DNA Res.">
        <title>Complete genomic structure of the bloom-forming toxic cyanobacterium Microcystis aeruginosa NIES-843.</title>
        <authorList>
            <person name="Kaneko T."/>
            <person name="Nakajima N."/>
            <person name="Okamoto S."/>
            <person name="Suzuki I."/>
            <person name="Tanabe Y."/>
            <person name="Tamaoki M."/>
            <person name="Nakamura Y."/>
            <person name="Kasai F."/>
            <person name="Watanabe A."/>
            <person name="Kawashima K."/>
            <person name="Kishida Y."/>
            <person name="Ono A."/>
            <person name="Shimizu Y."/>
            <person name="Takahashi C."/>
            <person name="Minami C."/>
            <person name="Fujishiro T."/>
            <person name="Kohara M."/>
            <person name="Katoh M."/>
            <person name="Nakazaki N."/>
            <person name="Nakayama S."/>
            <person name="Yamada M."/>
            <person name="Tabata S."/>
            <person name="Watanabe M.M."/>
        </authorList>
    </citation>
    <scope>NUCLEOTIDE SEQUENCE [LARGE SCALE GENOMIC DNA]</scope>
    <source>
        <strain>NIES-843 / IAM M-247</strain>
    </source>
</reference>
<protein>
    <recommendedName>
        <fullName evidence="1">NAD(P)H-quinone oxidoreductase subunit L</fullName>
        <ecNumber evidence="1">7.1.1.-</ecNumber>
    </recommendedName>
    <alternativeName>
        <fullName evidence="1">NAD(P)H dehydrogenase I subunit L</fullName>
    </alternativeName>
    <alternativeName>
        <fullName>NDH-1 subunit L</fullName>
    </alternativeName>
    <alternativeName>
        <fullName>NDH-L</fullName>
    </alternativeName>
</protein>
<proteinExistence type="inferred from homology"/>
<organism>
    <name type="scientific">Microcystis aeruginosa (strain NIES-843 / IAM M-2473)</name>
    <dbReference type="NCBI Taxonomy" id="449447"/>
    <lineage>
        <taxon>Bacteria</taxon>
        <taxon>Bacillati</taxon>
        <taxon>Cyanobacteriota</taxon>
        <taxon>Cyanophyceae</taxon>
        <taxon>Oscillatoriophycideae</taxon>
        <taxon>Chroococcales</taxon>
        <taxon>Microcystaceae</taxon>
        <taxon>Microcystis</taxon>
    </lineage>
</organism>
<keyword id="KW-0472">Membrane</keyword>
<keyword id="KW-0520">NAD</keyword>
<keyword id="KW-0521">NADP</keyword>
<keyword id="KW-0618">Plastoquinone</keyword>
<keyword id="KW-0874">Quinone</keyword>
<keyword id="KW-0793">Thylakoid</keyword>
<keyword id="KW-1278">Translocase</keyword>
<keyword id="KW-0812">Transmembrane</keyword>
<keyword id="KW-1133">Transmembrane helix</keyword>
<keyword id="KW-0813">Transport</keyword>
<feature type="chain" id="PRO_0000353669" description="NAD(P)H-quinone oxidoreductase subunit L">
    <location>
        <begin position="1"/>
        <end position="79"/>
    </location>
</feature>
<feature type="transmembrane region" description="Helical" evidence="1">
    <location>
        <begin position="10"/>
        <end position="30"/>
    </location>
</feature>
<feature type="transmembrane region" description="Helical" evidence="1">
    <location>
        <begin position="48"/>
        <end position="68"/>
    </location>
</feature>
<comment type="function">
    <text evidence="1">NDH-1 shuttles electrons from an unknown electron donor, via FMN and iron-sulfur (Fe-S) centers, to quinones in the respiratory and/or the photosynthetic chain. The immediate electron acceptor for the enzyme in this species is believed to be plastoquinone. Couples the redox reaction to proton translocation, and thus conserves the redox energy in a proton gradient. Cyanobacterial NDH-1 also plays a role in inorganic carbon-concentration.</text>
</comment>
<comment type="catalytic activity">
    <reaction evidence="1">
        <text>a plastoquinone + NADH + (n+1) H(+)(in) = a plastoquinol + NAD(+) + n H(+)(out)</text>
        <dbReference type="Rhea" id="RHEA:42608"/>
        <dbReference type="Rhea" id="RHEA-COMP:9561"/>
        <dbReference type="Rhea" id="RHEA-COMP:9562"/>
        <dbReference type="ChEBI" id="CHEBI:15378"/>
        <dbReference type="ChEBI" id="CHEBI:17757"/>
        <dbReference type="ChEBI" id="CHEBI:57540"/>
        <dbReference type="ChEBI" id="CHEBI:57945"/>
        <dbReference type="ChEBI" id="CHEBI:62192"/>
    </reaction>
</comment>
<comment type="catalytic activity">
    <reaction evidence="1">
        <text>a plastoquinone + NADPH + (n+1) H(+)(in) = a plastoquinol + NADP(+) + n H(+)(out)</text>
        <dbReference type="Rhea" id="RHEA:42612"/>
        <dbReference type="Rhea" id="RHEA-COMP:9561"/>
        <dbReference type="Rhea" id="RHEA-COMP:9562"/>
        <dbReference type="ChEBI" id="CHEBI:15378"/>
        <dbReference type="ChEBI" id="CHEBI:17757"/>
        <dbReference type="ChEBI" id="CHEBI:57783"/>
        <dbReference type="ChEBI" id="CHEBI:58349"/>
        <dbReference type="ChEBI" id="CHEBI:62192"/>
    </reaction>
</comment>
<comment type="subunit">
    <text evidence="1">NDH-1 can be composed of about 15 different subunits; different subcomplexes with different compositions have been identified which probably have different functions.</text>
</comment>
<comment type="subcellular location">
    <subcellularLocation>
        <location evidence="1">Cellular thylakoid membrane</location>
        <topology evidence="1">Multi-pass membrane protein</topology>
    </subcellularLocation>
</comment>
<comment type="similarity">
    <text evidence="1">Belongs to the complex I NdhL subunit family.</text>
</comment>